<dbReference type="EMBL" id="CP000607">
    <property type="protein sequence ID" value="ABP37443.1"/>
    <property type="molecule type" value="Genomic_DNA"/>
</dbReference>
<dbReference type="SMR" id="A4SG34"/>
<dbReference type="STRING" id="290318.Cvib_1432"/>
<dbReference type="KEGG" id="pvi:Cvib_1432"/>
<dbReference type="eggNOG" id="COG0217">
    <property type="taxonomic scope" value="Bacteria"/>
</dbReference>
<dbReference type="HOGENOM" id="CLU_062974_2_2_10"/>
<dbReference type="OrthoDB" id="9781053at2"/>
<dbReference type="GO" id="GO:0005829">
    <property type="term" value="C:cytosol"/>
    <property type="evidence" value="ECO:0007669"/>
    <property type="project" value="TreeGrafter"/>
</dbReference>
<dbReference type="GO" id="GO:0003677">
    <property type="term" value="F:DNA binding"/>
    <property type="evidence" value="ECO:0007669"/>
    <property type="project" value="UniProtKB-UniRule"/>
</dbReference>
<dbReference type="GO" id="GO:0006355">
    <property type="term" value="P:regulation of DNA-templated transcription"/>
    <property type="evidence" value="ECO:0007669"/>
    <property type="project" value="UniProtKB-UniRule"/>
</dbReference>
<dbReference type="FunFam" id="1.10.10.200:FF:000002">
    <property type="entry name" value="Probable transcriptional regulatory protein CLM62_37755"/>
    <property type="match status" value="1"/>
</dbReference>
<dbReference type="Gene3D" id="1.10.10.200">
    <property type="match status" value="1"/>
</dbReference>
<dbReference type="Gene3D" id="3.30.70.980">
    <property type="match status" value="2"/>
</dbReference>
<dbReference type="HAMAP" id="MF_00693">
    <property type="entry name" value="Transcrip_reg_TACO1"/>
    <property type="match status" value="1"/>
</dbReference>
<dbReference type="InterPro" id="IPR017856">
    <property type="entry name" value="Integrase-like_N"/>
</dbReference>
<dbReference type="InterPro" id="IPR048300">
    <property type="entry name" value="TACO1_YebC-like_2nd/3rd_dom"/>
</dbReference>
<dbReference type="InterPro" id="IPR049083">
    <property type="entry name" value="TACO1_YebC_N"/>
</dbReference>
<dbReference type="InterPro" id="IPR002876">
    <property type="entry name" value="Transcrip_reg_TACO1-like"/>
</dbReference>
<dbReference type="InterPro" id="IPR026564">
    <property type="entry name" value="Transcrip_reg_TACO1-like_dom3"/>
</dbReference>
<dbReference type="InterPro" id="IPR029072">
    <property type="entry name" value="YebC-like"/>
</dbReference>
<dbReference type="NCBIfam" id="NF001030">
    <property type="entry name" value="PRK00110.1"/>
    <property type="match status" value="1"/>
</dbReference>
<dbReference type="NCBIfam" id="NF009044">
    <property type="entry name" value="PRK12378.1"/>
    <property type="match status" value="1"/>
</dbReference>
<dbReference type="NCBIfam" id="TIGR01033">
    <property type="entry name" value="YebC/PmpR family DNA-binding transcriptional regulator"/>
    <property type="match status" value="1"/>
</dbReference>
<dbReference type="PANTHER" id="PTHR12532:SF6">
    <property type="entry name" value="TRANSCRIPTIONAL REGULATORY PROTEIN YEBC-RELATED"/>
    <property type="match status" value="1"/>
</dbReference>
<dbReference type="PANTHER" id="PTHR12532">
    <property type="entry name" value="TRANSLATIONAL ACTIVATOR OF CYTOCHROME C OXIDASE 1"/>
    <property type="match status" value="1"/>
</dbReference>
<dbReference type="Pfam" id="PF20772">
    <property type="entry name" value="TACO1_YebC_N"/>
    <property type="match status" value="1"/>
</dbReference>
<dbReference type="Pfam" id="PF01709">
    <property type="entry name" value="Transcrip_reg"/>
    <property type="match status" value="1"/>
</dbReference>
<dbReference type="SUPFAM" id="SSF75625">
    <property type="entry name" value="YebC-like"/>
    <property type="match status" value="1"/>
</dbReference>
<evidence type="ECO:0000255" key="1">
    <source>
        <dbReference type="HAMAP-Rule" id="MF_00693"/>
    </source>
</evidence>
<reference key="1">
    <citation type="submission" date="2007-03" db="EMBL/GenBank/DDBJ databases">
        <title>Complete sequence of Prosthecochloris vibrioformis DSM 265.</title>
        <authorList>
            <consortium name="US DOE Joint Genome Institute"/>
            <person name="Copeland A."/>
            <person name="Lucas S."/>
            <person name="Lapidus A."/>
            <person name="Barry K."/>
            <person name="Detter J.C."/>
            <person name="Glavina del Rio T."/>
            <person name="Hammon N."/>
            <person name="Israni S."/>
            <person name="Pitluck S."/>
            <person name="Schmutz J."/>
            <person name="Larimer F."/>
            <person name="Land M."/>
            <person name="Hauser L."/>
            <person name="Mikhailova N."/>
            <person name="Li T."/>
            <person name="Overmann J."/>
            <person name="Schuster S.C."/>
            <person name="Bryant D.A."/>
            <person name="Richardson P."/>
        </authorList>
    </citation>
    <scope>NUCLEOTIDE SEQUENCE [LARGE SCALE GENOMIC DNA]</scope>
    <source>
        <strain>DSM 265 / 1930</strain>
    </source>
</reference>
<protein>
    <recommendedName>
        <fullName evidence="1">Probable transcriptional regulatory protein Cvib_1432</fullName>
    </recommendedName>
</protein>
<feature type="chain" id="PRO_1000083165" description="Probable transcriptional regulatory protein Cvib_1432">
    <location>
        <begin position="1"/>
        <end position="250"/>
    </location>
</feature>
<keyword id="KW-0963">Cytoplasm</keyword>
<keyword id="KW-0238">DNA-binding</keyword>
<keyword id="KW-0804">Transcription</keyword>
<keyword id="KW-0805">Transcription regulation</keyword>
<sequence>MSGHSKWATIKRKKSATDQKRGNLFTKLVKEITIAAKMGGGDPAGNPRLRLAIDTARSNSMPMDNIQRAIKKGTGELEGVSYDEITYEGYGPAGIALIIETATDNKNRTVADLRHIMSRNNGSLGENGSVSWMFHRKGSIEVPGGSATEEQLMEVLLDAGLEDIGGDAEGGYTVTTDVHDLESAKKALEEAGIAYENAKMDLIPENFIELEADDARKVIKLIDALEGNDDIQAVFSNMEISEGAMDSLDE</sequence>
<proteinExistence type="inferred from homology"/>
<gene>
    <name type="ordered locus">Cvib_1432</name>
</gene>
<accession>A4SG34</accession>
<comment type="subcellular location">
    <subcellularLocation>
        <location evidence="1">Cytoplasm</location>
    </subcellularLocation>
</comment>
<comment type="similarity">
    <text evidence="1">Belongs to the TACO1 family.</text>
</comment>
<name>Y1432_CHLPM</name>
<organism>
    <name type="scientific">Chlorobium phaeovibrioides (strain DSM 265 / 1930)</name>
    <name type="common">Prosthecochloris vibrioformis (strain DSM 265)</name>
    <dbReference type="NCBI Taxonomy" id="290318"/>
    <lineage>
        <taxon>Bacteria</taxon>
        <taxon>Pseudomonadati</taxon>
        <taxon>Chlorobiota</taxon>
        <taxon>Chlorobiia</taxon>
        <taxon>Chlorobiales</taxon>
        <taxon>Chlorobiaceae</taxon>
        <taxon>Chlorobium/Pelodictyon group</taxon>
        <taxon>Chlorobium</taxon>
    </lineage>
</organism>